<organism>
    <name type="scientific">Aeromonas salmonicida (strain A449)</name>
    <dbReference type="NCBI Taxonomy" id="382245"/>
    <lineage>
        <taxon>Bacteria</taxon>
        <taxon>Pseudomonadati</taxon>
        <taxon>Pseudomonadota</taxon>
        <taxon>Gammaproteobacteria</taxon>
        <taxon>Aeromonadales</taxon>
        <taxon>Aeromonadaceae</taxon>
        <taxon>Aeromonas</taxon>
    </lineage>
</organism>
<sequence length="337" mass="36147">MRVLGIETSCDETGIAIFDDQKGILSHQLYSQVKLHADYGGVVPELASRDHVRKTIPLIQAALQEAGLDKDGIDGIAYTAGPGLVGAILVGATIGRSLAMAWNKPAIAVHHMEGHLLAPMLEERAPEFPFVALLVSGGHSMLVRVDGIGSYQLLGESIDDAAGEAFDKTAKLMGLDYPGGPLLSRLAEKGTTGRFHFPRPMTDRPGLDMSFSGLKTFAANTIAANGDDEQTRADIARAFEDAVVDTLAIKCRRALKETGLKRLVVAGGVSANRHLRAQLAELMESLKGKVFYPRTEYCTDNGAMIAYAGMQRLKAGVFEPLAVKAVPRWPLDTLDPV</sequence>
<comment type="function">
    <text evidence="1">Required for the formation of a threonylcarbamoyl group on adenosine at position 37 (t(6)A37) in tRNAs that read codons beginning with adenine. Is involved in the transfer of the threonylcarbamoyl moiety of threonylcarbamoyl-AMP (TC-AMP) to the N6 group of A37, together with TsaE and TsaB. TsaD likely plays a direct catalytic role in this reaction.</text>
</comment>
<comment type="catalytic activity">
    <reaction evidence="1">
        <text>L-threonylcarbamoyladenylate + adenosine(37) in tRNA = N(6)-L-threonylcarbamoyladenosine(37) in tRNA + AMP + H(+)</text>
        <dbReference type="Rhea" id="RHEA:37059"/>
        <dbReference type="Rhea" id="RHEA-COMP:10162"/>
        <dbReference type="Rhea" id="RHEA-COMP:10163"/>
        <dbReference type="ChEBI" id="CHEBI:15378"/>
        <dbReference type="ChEBI" id="CHEBI:73682"/>
        <dbReference type="ChEBI" id="CHEBI:74411"/>
        <dbReference type="ChEBI" id="CHEBI:74418"/>
        <dbReference type="ChEBI" id="CHEBI:456215"/>
        <dbReference type="EC" id="2.3.1.234"/>
    </reaction>
</comment>
<comment type="cofactor">
    <cofactor evidence="1">
        <name>Fe(2+)</name>
        <dbReference type="ChEBI" id="CHEBI:29033"/>
    </cofactor>
    <text evidence="1">Binds 1 Fe(2+) ion per subunit.</text>
</comment>
<comment type="subcellular location">
    <subcellularLocation>
        <location evidence="1">Cytoplasm</location>
    </subcellularLocation>
</comment>
<comment type="similarity">
    <text evidence="1">Belongs to the KAE1 / TsaD family.</text>
</comment>
<reference key="1">
    <citation type="journal article" date="2008" name="BMC Genomics">
        <title>The genome of Aeromonas salmonicida subsp. salmonicida A449: insights into the evolution of a fish pathogen.</title>
        <authorList>
            <person name="Reith M.E."/>
            <person name="Singh R.K."/>
            <person name="Curtis B."/>
            <person name="Boyd J.M."/>
            <person name="Bouevitch A."/>
            <person name="Kimball J."/>
            <person name="Munholland J."/>
            <person name="Murphy C."/>
            <person name="Sarty D."/>
            <person name="Williams J."/>
            <person name="Nash J.H."/>
            <person name="Johnson S.C."/>
            <person name="Brown L.L."/>
        </authorList>
    </citation>
    <scope>NUCLEOTIDE SEQUENCE [LARGE SCALE GENOMIC DNA]</scope>
    <source>
        <strain>A449</strain>
    </source>
</reference>
<feature type="chain" id="PRO_0000303248" description="tRNA N6-adenosine threonylcarbamoyltransferase">
    <location>
        <begin position="1"/>
        <end position="337"/>
    </location>
</feature>
<feature type="binding site" evidence="1">
    <location>
        <position position="111"/>
    </location>
    <ligand>
        <name>Fe cation</name>
        <dbReference type="ChEBI" id="CHEBI:24875"/>
    </ligand>
</feature>
<feature type="binding site" evidence="1">
    <location>
        <position position="115"/>
    </location>
    <ligand>
        <name>Fe cation</name>
        <dbReference type="ChEBI" id="CHEBI:24875"/>
    </ligand>
</feature>
<feature type="binding site" evidence="1">
    <location>
        <begin position="134"/>
        <end position="138"/>
    </location>
    <ligand>
        <name>substrate</name>
    </ligand>
</feature>
<feature type="binding site" evidence="1">
    <location>
        <position position="167"/>
    </location>
    <ligand>
        <name>substrate</name>
    </ligand>
</feature>
<feature type="binding site" evidence="1">
    <location>
        <position position="180"/>
    </location>
    <ligand>
        <name>substrate</name>
    </ligand>
</feature>
<feature type="binding site" evidence="1">
    <location>
        <position position="272"/>
    </location>
    <ligand>
        <name>substrate</name>
    </ligand>
</feature>
<feature type="binding site" evidence="1">
    <location>
        <position position="300"/>
    </location>
    <ligand>
        <name>Fe cation</name>
        <dbReference type="ChEBI" id="CHEBI:24875"/>
    </ligand>
</feature>
<gene>
    <name evidence="1" type="primary">tsaD</name>
    <name type="synonym">gcp</name>
    <name type="ordered locus">ASA_3465</name>
</gene>
<keyword id="KW-0012">Acyltransferase</keyword>
<keyword id="KW-0963">Cytoplasm</keyword>
<keyword id="KW-0408">Iron</keyword>
<keyword id="KW-0479">Metal-binding</keyword>
<keyword id="KW-0808">Transferase</keyword>
<keyword id="KW-0819">tRNA processing</keyword>
<proteinExistence type="inferred from homology"/>
<accession>A4SRB1</accession>
<name>TSAD_AERS4</name>
<dbReference type="EC" id="2.3.1.234" evidence="1"/>
<dbReference type="EMBL" id="CP000644">
    <property type="protein sequence ID" value="ABO91433.1"/>
    <property type="molecule type" value="Genomic_DNA"/>
</dbReference>
<dbReference type="RefSeq" id="WP_005318896.1">
    <property type="nucleotide sequence ID" value="NC_009348.1"/>
</dbReference>
<dbReference type="SMR" id="A4SRB1"/>
<dbReference type="STRING" id="29491.GCA_000820065_01057"/>
<dbReference type="KEGG" id="asa:ASA_3465"/>
<dbReference type="eggNOG" id="COG0533">
    <property type="taxonomic scope" value="Bacteria"/>
</dbReference>
<dbReference type="HOGENOM" id="CLU_023208_0_0_6"/>
<dbReference type="Proteomes" id="UP000000225">
    <property type="component" value="Chromosome"/>
</dbReference>
<dbReference type="GO" id="GO:0005737">
    <property type="term" value="C:cytoplasm"/>
    <property type="evidence" value="ECO:0007669"/>
    <property type="project" value="UniProtKB-SubCell"/>
</dbReference>
<dbReference type="GO" id="GO:0005506">
    <property type="term" value="F:iron ion binding"/>
    <property type="evidence" value="ECO:0007669"/>
    <property type="project" value="UniProtKB-UniRule"/>
</dbReference>
<dbReference type="GO" id="GO:0061711">
    <property type="term" value="F:N(6)-L-threonylcarbamoyladenine synthase activity"/>
    <property type="evidence" value="ECO:0007669"/>
    <property type="project" value="UniProtKB-EC"/>
</dbReference>
<dbReference type="GO" id="GO:0002949">
    <property type="term" value="P:tRNA threonylcarbamoyladenosine modification"/>
    <property type="evidence" value="ECO:0007669"/>
    <property type="project" value="UniProtKB-UniRule"/>
</dbReference>
<dbReference type="CDD" id="cd24133">
    <property type="entry name" value="ASKHA_NBD_TsaD_bac"/>
    <property type="match status" value="1"/>
</dbReference>
<dbReference type="FunFam" id="3.30.420.40:FF:000031">
    <property type="entry name" value="tRNA N6-adenosine threonylcarbamoyltransferase"/>
    <property type="match status" value="1"/>
</dbReference>
<dbReference type="Gene3D" id="3.30.420.40">
    <property type="match status" value="2"/>
</dbReference>
<dbReference type="HAMAP" id="MF_01445">
    <property type="entry name" value="TsaD"/>
    <property type="match status" value="1"/>
</dbReference>
<dbReference type="InterPro" id="IPR043129">
    <property type="entry name" value="ATPase_NBD"/>
</dbReference>
<dbReference type="InterPro" id="IPR000905">
    <property type="entry name" value="Gcp-like_dom"/>
</dbReference>
<dbReference type="InterPro" id="IPR017861">
    <property type="entry name" value="KAE1/TsaD"/>
</dbReference>
<dbReference type="InterPro" id="IPR017860">
    <property type="entry name" value="Peptidase_M22_CS"/>
</dbReference>
<dbReference type="InterPro" id="IPR022450">
    <property type="entry name" value="TsaD"/>
</dbReference>
<dbReference type="NCBIfam" id="TIGR00329">
    <property type="entry name" value="gcp_kae1"/>
    <property type="match status" value="1"/>
</dbReference>
<dbReference type="NCBIfam" id="TIGR03723">
    <property type="entry name" value="T6A_TsaD_YgjD"/>
    <property type="match status" value="1"/>
</dbReference>
<dbReference type="PANTHER" id="PTHR11735">
    <property type="entry name" value="TRNA N6-ADENOSINE THREONYLCARBAMOYLTRANSFERASE"/>
    <property type="match status" value="1"/>
</dbReference>
<dbReference type="PANTHER" id="PTHR11735:SF6">
    <property type="entry name" value="TRNA N6-ADENOSINE THREONYLCARBAMOYLTRANSFERASE, MITOCHONDRIAL"/>
    <property type="match status" value="1"/>
</dbReference>
<dbReference type="Pfam" id="PF00814">
    <property type="entry name" value="TsaD"/>
    <property type="match status" value="1"/>
</dbReference>
<dbReference type="PRINTS" id="PR00789">
    <property type="entry name" value="OSIALOPTASE"/>
</dbReference>
<dbReference type="SUPFAM" id="SSF53067">
    <property type="entry name" value="Actin-like ATPase domain"/>
    <property type="match status" value="2"/>
</dbReference>
<dbReference type="PROSITE" id="PS01016">
    <property type="entry name" value="GLYCOPROTEASE"/>
    <property type="match status" value="1"/>
</dbReference>
<protein>
    <recommendedName>
        <fullName evidence="1">tRNA N6-adenosine threonylcarbamoyltransferase</fullName>
        <ecNumber evidence="1">2.3.1.234</ecNumber>
    </recommendedName>
    <alternativeName>
        <fullName evidence="1">N6-L-threonylcarbamoyladenine synthase</fullName>
        <shortName evidence="1">t(6)A synthase</shortName>
    </alternativeName>
    <alternativeName>
        <fullName evidence="1">t(6)A37 threonylcarbamoyladenosine biosynthesis protein TsaD</fullName>
    </alternativeName>
    <alternativeName>
        <fullName evidence="1">tRNA threonylcarbamoyladenosine biosynthesis protein TsaD</fullName>
    </alternativeName>
</protein>
<evidence type="ECO:0000255" key="1">
    <source>
        <dbReference type="HAMAP-Rule" id="MF_01445"/>
    </source>
</evidence>